<dbReference type="EMBL" id="AE000516">
    <property type="protein sequence ID" value="AAK47743.1"/>
    <property type="molecule type" value="Genomic_DNA"/>
</dbReference>
<dbReference type="PIR" id="G70533">
    <property type="entry name" value="G70533"/>
</dbReference>
<dbReference type="SMR" id="P9WI96"/>
<dbReference type="KEGG" id="mtc:MT3400"/>
<dbReference type="PATRIC" id="fig|83331.31.peg.3659"/>
<dbReference type="HOGENOM" id="CLU_078518_1_0_11"/>
<dbReference type="Proteomes" id="UP000001020">
    <property type="component" value="Chromosome"/>
</dbReference>
<dbReference type="GO" id="GO:0005737">
    <property type="term" value="C:cytoplasm"/>
    <property type="evidence" value="ECO:0000250"/>
    <property type="project" value="UniProtKB"/>
</dbReference>
<dbReference type="GO" id="GO:0042803">
    <property type="term" value="F:protein homodimerization activity"/>
    <property type="evidence" value="ECO:0000250"/>
    <property type="project" value="UniProtKB"/>
</dbReference>
<dbReference type="GO" id="GO:0030643">
    <property type="term" value="P:intracellular phosphate ion homeostasis"/>
    <property type="evidence" value="ECO:0007669"/>
    <property type="project" value="InterPro"/>
</dbReference>
<dbReference type="GO" id="GO:0045936">
    <property type="term" value="P:negative regulation of phosphate metabolic process"/>
    <property type="evidence" value="ECO:0000250"/>
    <property type="project" value="UniProtKB"/>
</dbReference>
<dbReference type="GO" id="GO:2000186">
    <property type="term" value="P:negative regulation of phosphate transmembrane transport"/>
    <property type="evidence" value="ECO:0000250"/>
    <property type="project" value="UniProtKB"/>
</dbReference>
<dbReference type="GO" id="GO:0006817">
    <property type="term" value="P:phosphate ion transport"/>
    <property type="evidence" value="ECO:0007669"/>
    <property type="project" value="UniProtKB-KW"/>
</dbReference>
<dbReference type="FunFam" id="1.20.58.220:FF:000004">
    <property type="entry name" value="Phosphate-specific transport system accessory protein PhoU"/>
    <property type="match status" value="1"/>
</dbReference>
<dbReference type="Gene3D" id="1.20.58.220">
    <property type="entry name" value="Phosphate transport system protein phou homolog 2, domain 2"/>
    <property type="match status" value="1"/>
</dbReference>
<dbReference type="InterPro" id="IPR028366">
    <property type="entry name" value="P_transport_PhoU"/>
</dbReference>
<dbReference type="InterPro" id="IPR038078">
    <property type="entry name" value="PhoU-like_sf"/>
</dbReference>
<dbReference type="InterPro" id="IPR026022">
    <property type="entry name" value="PhoU_dom"/>
</dbReference>
<dbReference type="NCBIfam" id="TIGR02135">
    <property type="entry name" value="phoU_full"/>
    <property type="match status" value="1"/>
</dbReference>
<dbReference type="PANTHER" id="PTHR42930">
    <property type="entry name" value="PHOSPHATE-SPECIFIC TRANSPORT SYSTEM ACCESSORY PROTEIN PHOU"/>
    <property type="match status" value="1"/>
</dbReference>
<dbReference type="PANTHER" id="PTHR42930:SF3">
    <property type="entry name" value="PHOSPHATE-SPECIFIC TRANSPORT SYSTEM ACCESSORY PROTEIN PHOU"/>
    <property type="match status" value="1"/>
</dbReference>
<dbReference type="Pfam" id="PF01895">
    <property type="entry name" value="PhoU"/>
    <property type="match status" value="2"/>
</dbReference>
<dbReference type="PIRSF" id="PIRSF003107">
    <property type="entry name" value="PhoU"/>
    <property type="match status" value="1"/>
</dbReference>
<dbReference type="SUPFAM" id="SSF109755">
    <property type="entry name" value="PhoU-like"/>
    <property type="match status" value="1"/>
</dbReference>
<sequence>MRTVYHQRLTELAGRLGEMCSLAGIAMKRATQALLEADIGAAEQVIRDHERIVAMRAQVEKEAFALLALQHPVAGELREIFSAVQIIADTERMGALAVHIAKITRREYPNQVLPEEVRNCFADMAKVAIALGDSARQVLVNRDPQEAAQLHDRDDAMDDLHRHLLSVLIDREWRHGVRVGVETALLGRFFERFADHAVEVGRRVIFMVTGVLPTEDEISTY</sequence>
<feature type="chain" id="PRO_0000428045" description="Phosphate-specific transport system accessory protein PhoU homolog 1">
    <location>
        <begin position="1"/>
        <end position="221"/>
    </location>
</feature>
<reference key="1">
    <citation type="journal article" date="2002" name="J. Bacteriol.">
        <title>Whole-genome comparison of Mycobacterium tuberculosis clinical and laboratory strains.</title>
        <authorList>
            <person name="Fleischmann R.D."/>
            <person name="Alland D."/>
            <person name="Eisen J.A."/>
            <person name="Carpenter L."/>
            <person name="White O."/>
            <person name="Peterson J.D."/>
            <person name="DeBoy R.T."/>
            <person name="Dodson R.J."/>
            <person name="Gwinn M.L."/>
            <person name="Haft D.H."/>
            <person name="Hickey E.K."/>
            <person name="Kolonay J.F."/>
            <person name="Nelson W.C."/>
            <person name="Umayam L.A."/>
            <person name="Ermolaeva M.D."/>
            <person name="Salzberg S.L."/>
            <person name="Delcher A."/>
            <person name="Utterback T.R."/>
            <person name="Weidman J.F."/>
            <person name="Khouri H.M."/>
            <person name="Gill J."/>
            <person name="Mikula A."/>
            <person name="Bishai W."/>
            <person name="Jacobs W.R. Jr."/>
            <person name="Venter J.C."/>
            <person name="Fraser C.M."/>
        </authorList>
    </citation>
    <scope>NUCLEOTIDE SEQUENCE [LARGE SCALE GENOMIC DNA]</scope>
    <source>
        <strain>CDC 1551 / Oshkosh</strain>
    </source>
</reference>
<keyword id="KW-0963">Cytoplasm</keyword>
<keyword id="KW-0592">Phosphate transport</keyword>
<keyword id="KW-1185">Reference proteome</keyword>
<keyword id="KW-0813">Transport</keyword>
<evidence type="ECO:0000250" key="1"/>
<evidence type="ECO:0000305" key="2"/>
<accession>P9WI96</accession>
<accession>L0TEX6</accession>
<accession>O07167</accession>
<accession>P65718</accession>
<comment type="function">
    <text evidence="1">Plays a role in the regulation of phosphate uptake. In this role, it may bind, possibly as a chaperone, to PhoR, PhoP or a PhoR-PhoP complex to promote dephosphorylation of phospho-PhoP, or inhibit formation of the PhoR-PhoP transitory complex (By similarity).</text>
</comment>
<comment type="subunit">
    <text evidence="1">Homodimer.</text>
</comment>
<comment type="subcellular location">
    <subcellularLocation>
        <location evidence="1">Cytoplasm</location>
    </subcellularLocation>
</comment>
<comment type="similarity">
    <text evidence="2">Belongs to the PhoU family.</text>
</comment>
<proteinExistence type="inferred from homology"/>
<organism>
    <name type="scientific">Mycobacterium tuberculosis (strain CDC 1551 / Oshkosh)</name>
    <dbReference type="NCBI Taxonomy" id="83331"/>
    <lineage>
        <taxon>Bacteria</taxon>
        <taxon>Bacillati</taxon>
        <taxon>Actinomycetota</taxon>
        <taxon>Actinomycetes</taxon>
        <taxon>Mycobacteriales</taxon>
        <taxon>Mycobacteriaceae</taxon>
        <taxon>Mycobacterium</taxon>
        <taxon>Mycobacterium tuberculosis complex</taxon>
    </lineage>
</organism>
<protein>
    <recommendedName>
        <fullName>Phosphate-specific transport system accessory protein PhoU homolog 1</fullName>
        <shortName>Pst system accessory protein PhoU homolog 1</shortName>
    </recommendedName>
</protein>
<gene>
    <name type="primary">phoU1</name>
    <name type="synonym">phoY1</name>
    <name type="ordered locus">MT3400</name>
</gene>
<name>PHOU1_MYCTO</name>